<sequence length="309" mass="35669">MPIRVPDELPAVNFLRQENVFVMTTSRASVQEIRPLKVLILNLMPKKIETENQFLRLLSNSPLQVDIRLLRIDSRESRNTPAEHLNNFYCNFEDICDENYDGLIVTGAPLGLVEFNDVAYWPQIQQVLEWAKEHVTSTLFVCWAVQAALNILYGIPKQTRQEKISGVYEHHITQPHALLTKGFDDTFLAPHSRYADFPAALIRDYTDLDILAESEEGDAYLFASKDKRIAFVTGHPEYDALTLAGEYFRDVEAGLAPRVPYNYFPNNDPTKTPRATWRSHGNLLFTNWLNYYVYQITPYDLRHMNPTLE</sequence>
<protein>
    <recommendedName>
        <fullName evidence="1">Homoserine O-succinyltransferase</fullName>
        <shortName evidence="1">HST</shortName>
        <ecNumber evidence="1">2.3.1.46</ecNumber>
    </recommendedName>
    <alternativeName>
        <fullName evidence="1">Homoserine transsuccinylase</fullName>
        <shortName evidence="1">HTS</shortName>
    </alternativeName>
</protein>
<dbReference type="EC" id="2.3.1.46" evidence="1"/>
<dbReference type="EMBL" id="CP000783">
    <property type="protein sequence ID" value="ABU75357.1"/>
    <property type="molecule type" value="Genomic_DNA"/>
</dbReference>
<dbReference type="SMR" id="A7MPD4"/>
<dbReference type="KEGG" id="esa:ESA_00052"/>
<dbReference type="HOGENOM" id="CLU_057851_0_1_6"/>
<dbReference type="UniPathway" id="UPA00051">
    <property type="reaction ID" value="UER00075"/>
</dbReference>
<dbReference type="Proteomes" id="UP000000260">
    <property type="component" value="Chromosome"/>
</dbReference>
<dbReference type="GO" id="GO:0005737">
    <property type="term" value="C:cytoplasm"/>
    <property type="evidence" value="ECO:0007669"/>
    <property type="project" value="UniProtKB-SubCell"/>
</dbReference>
<dbReference type="GO" id="GO:0004414">
    <property type="term" value="F:homoserine O-acetyltransferase activity"/>
    <property type="evidence" value="ECO:0007669"/>
    <property type="project" value="UniProtKB-UniRule"/>
</dbReference>
<dbReference type="GO" id="GO:0008899">
    <property type="term" value="F:homoserine O-succinyltransferase activity"/>
    <property type="evidence" value="ECO:0007669"/>
    <property type="project" value="UniProtKB-EC"/>
</dbReference>
<dbReference type="GO" id="GO:0019281">
    <property type="term" value="P:L-methionine biosynthetic process from homoserine via O-succinyl-L-homoserine and cystathionine"/>
    <property type="evidence" value="ECO:0007669"/>
    <property type="project" value="InterPro"/>
</dbReference>
<dbReference type="CDD" id="cd03131">
    <property type="entry name" value="GATase1_HTS"/>
    <property type="match status" value="1"/>
</dbReference>
<dbReference type="FunFam" id="3.40.50.880:FF:000004">
    <property type="entry name" value="Homoserine O-succinyltransferase"/>
    <property type="match status" value="1"/>
</dbReference>
<dbReference type="Gene3D" id="3.40.50.880">
    <property type="match status" value="1"/>
</dbReference>
<dbReference type="HAMAP" id="MF_00295">
    <property type="entry name" value="MetA_acyltransf"/>
    <property type="match status" value="1"/>
</dbReference>
<dbReference type="InterPro" id="IPR029062">
    <property type="entry name" value="Class_I_gatase-like"/>
</dbReference>
<dbReference type="InterPro" id="IPR005697">
    <property type="entry name" value="HST_MetA"/>
</dbReference>
<dbReference type="InterPro" id="IPR033752">
    <property type="entry name" value="MetA_family"/>
</dbReference>
<dbReference type="NCBIfam" id="TIGR01001">
    <property type="entry name" value="metA"/>
    <property type="match status" value="1"/>
</dbReference>
<dbReference type="PANTHER" id="PTHR20919">
    <property type="entry name" value="HOMOSERINE O-SUCCINYLTRANSFERASE"/>
    <property type="match status" value="1"/>
</dbReference>
<dbReference type="PANTHER" id="PTHR20919:SF0">
    <property type="entry name" value="HOMOSERINE O-SUCCINYLTRANSFERASE"/>
    <property type="match status" value="1"/>
</dbReference>
<dbReference type="Pfam" id="PF04204">
    <property type="entry name" value="HTS"/>
    <property type="match status" value="1"/>
</dbReference>
<dbReference type="PIRSF" id="PIRSF000450">
    <property type="entry name" value="H_ser_succinyltr"/>
    <property type="match status" value="1"/>
</dbReference>
<dbReference type="SUPFAM" id="SSF52317">
    <property type="entry name" value="Class I glutamine amidotransferase-like"/>
    <property type="match status" value="1"/>
</dbReference>
<comment type="function">
    <text evidence="1">Transfers a succinyl group from succinyl-CoA to L-homoserine, forming succinyl-L-homoserine.</text>
</comment>
<comment type="catalytic activity">
    <reaction evidence="1">
        <text>L-homoserine + succinyl-CoA = O-succinyl-L-homoserine + CoA</text>
        <dbReference type="Rhea" id="RHEA:22008"/>
        <dbReference type="ChEBI" id="CHEBI:57287"/>
        <dbReference type="ChEBI" id="CHEBI:57292"/>
        <dbReference type="ChEBI" id="CHEBI:57476"/>
        <dbReference type="ChEBI" id="CHEBI:57661"/>
        <dbReference type="EC" id="2.3.1.46"/>
    </reaction>
</comment>
<comment type="pathway">
    <text evidence="1">Amino-acid biosynthesis; L-methionine biosynthesis via de novo pathway; O-succinyl-L-homoserine from L-homoserine: step 1/1.</text>
</comment>
<comment type="subcellular location">
    <subcellularLocation>
        <location evidence="1">Cytoplasm</location>
    </subcellularLocation>
</comment>
<comment type="similarity">
    <text evidence="1">Belongs to the MetA family.</text>
</comment>
<accession>A7MPD4</accession>
<organism>
    <name type="scientific">Cronobacter sakazakii (strain ATCC BAA-894)</name>
    <name type="common">Enterobacter sakazakii</name>
    <dbReference type="NCBI Taxonomy" id="290339"/>
    <lineage>
        <taxon>Bacteria</taxon>
        <taxon>Pseudomonadati</taxon>
        <taxon>Pseudomonadota</taxon>
        <taxon>Gammaproteobacteria</taxon>
        <taxon>Enterobacterales</taxon>
        <taxon>Enterobacteriaceae</taxon>
        <taxon>Cronobacter</taxon>
    </lineage>
</organism>
<reference key="1">
    <citation type="journal article" date="2010" name="PLoS ONE">
        <title>Genome sequence of Cronobacter sakazakii BAA-894 and comparative genomic hybridization analysis with other Cronobacter species.</title>
        <authorList>
            <person name="Kucerova E."/>
            <person name="Clifton S.W."/>
            <person name="Xia X.Q."/>
            <person name="Long F."/>
            <person name="Porwollik S."/>
            <person name="Fulton L."/>
            <person name="Fronick C."/>
            <person name="Minx P."/>
            <person name="Kyung K."/>
            <person name="Warren W."/>
            <person name="Fulton R."/>
            <person name="Feng D."/>
            <person name="Wollam A."/>
            <person name="Shah N."/>
            <person name="Bhonagiri V."/>
            <person name="Nash W.E."/>
            <person name="Hallsworth-Pepin K."/>
            <person name="Wilson R.K."/>
            <person name="McClelland M."/>
            <person name="Forsythe S.J."/>
        </authorList>
    </citation>
    <scope>NUCLEOTIDE SEQUENCE [LARGE SCALE GENOMIC DNA]</scope>
    <source>
        <strain>ATCC BAA-894</strain>
    </source>
</reference>
<name>METAS_CROS8</name>
<gene>
    <name evidence="1" type="primary">metAS</name>
    <name type="ordered locus">ESA_00052</name>
</gene>
<feature type="chain" id="PRO_1000021814" description="Homoserine O-succinyltransferase">
    <location>
        <begin position="1"/>
        <end position="309"/>
    </location>
</feature>
<feature type="active site" description="Acyl-thioester intermediate" evidence="1">
    <location>
        <position position="142"/>
    </location>
</feature>
<feature type="active site" description="Proton acceptor" evidence="1">
    <location>
        <position position="235"/>
    </location>
</feature>
<feature type="active site" evidence="1">
    <location>
        <position position="237"/>
    </location>
</feature>
<feature type="binding site" evidence="1">
    <location>
        <position position="163"/>
    </location>
    <ligand>
        <name>substrate</name>
    </ligand>
</feature>
<feature type="binding site" evidence="1">
    <location>
        <position position="192"/>
    </location>
    <ligand>
        <name>substrate</name>
    </ligand>
</feature>
<feature type="binding site" evidence="1">
    <location>
        <position position="249"/>
    </location>
    <ligand>
        <name>substrate</name>
    </ligand>
</feature>
<feature type="site" description="Important for acyl-CoA specificity" evidence="1">
    <location>
        <position position="111"/>
    </location>
</feature>
<feature type="site" description="Important for substrate specificity" evidence="1">
    <location>
        <position position="192"/>
    </location>
</feature>
<evidence type="ECO:0000255" key="1">
    <source>
        <dbReference type="HAMAP-Rule" id="MF_00295"/>
    </source>
</evidence>
<keyword id="KW-0012">Acyltransferase</keyword>
<keyword id="KW-0028">Amino-acid biosynthesis</keyword>
<keyword id="KW-0963">Cytoplasm</keyword>
<keyword id="KW-0486">Methionine biosynthesis</keyword>
<keyword id="KW-1185">Reference proteome</keyword>
<keyword id="KW-0808">Transferase</keyword>
<proteinExistence type="inferred from homology"/>